<feature type="chain" id="PRO_0000098491" description="Isoleucine--tRNA ligase">
    <location>
        <begin position="1"/>
        <end position="974"/>
    </location>
</feature>
<feature type="short sequence motif" description="'HIGH' region">
    <location>
        <begin position="69"/>
        <end position="79"/>
    </location>
</feature>
<feature type="short sequence motif" description="'KMSKS' region">
    <location>
        <begin position="626"/>
        <end position="630"/>
    </location>
</feature>
<feature type="binding site" evidence="1">
    <location>
        <position position="585"/>
    </location>
    <ligand>
        <name>L-isoleucyl-5'-AMP</name>
        <dbReference type="ChEBI" id="CHEBI:178002"/>
    </ligand>
</feature>
<feature type="binding site" evidence="1">
    <location>
        <position position="629"/>
    </location>
    <ligand>
        <name>ATP</name>
        <dbReference type="ChEBI" id="CHEBI:30616"/>
    </ligand>
</feature>
<feature type="binding site" evidence="1">
    <location>
        <position position="939"/>
    </location>
    <ligand>
        <name>Zn(2+)</name>
        <dbReference type="ChEBI" id="CHEBI:29105"/>
    </ligand>
</feature>
<feature type="binding site" evidence="1">
    <location>
        <position position="942"/>
    </location>
    <ligand>
        <name>Zn(2+)</name>
        <dbReference type="ChEBI" id="CHEBI:29105"/>
    </ligand>
</feature>
<feature type="binding site" evidence="1">
    <location>
        <position position="959"/>
    </location>
    <ligand>
        <name>Zn(2+)</name>
        <dbReference type="ChEBI" id="CHEBI:29105"/>
    </ligand>
</feature>
<feature type="binding site" evidence="1">
    <location>
        <position position="962"/>
    </location>
    <ligand>
        <name>Zn(2+)</name>
        <dbReference type="ChEBI" id="CHEBI:29105"/>
    </ligand>
</feature>
<gene>
    <name evidence="1" type="primary">ileS</name>
    <name type="ordered locus">SYNW0289</name>
</gene>
<proteinExistence type="inferred from homology"/>
<accession>Q7U9G9</accession>
<reference key="1">
    <citation type="journal article" date="2003" name="Nature">
        <title>The genome of a motile marine Synechococcus.</title>
        <authorList>
            <person name="Palenik B."/>
            <person name="Brahamsha B."/>
            <person name="Larimer F.W."/>
            <person name="Land M.L."/>
            <person name="Hauser L."/>
            <person name="Chain P."/>
            <person name="Lamerdin J.E."/>
            <person name="Regala W."/>
            <person name="Allen E.E."/>
            <person name="McCarren J."/>
            <person name="Paulsen I.T."/>
            <person name="Dufresne A."/>
            <person name="Partensky F."/>
            <person name="Webb E.A."/>
            <person name="Waterbury J."/>
        </authorList>
    </citation>
    <scope>NUCLEOTIDE SEQUENCE [LARGE SCALE GENOMIC DNA]</scope>
    <source>
        <strain>WH8102</strain>
    </source>
</reference>
<keyword id="KW-0030">Aminoacyl-tRNA synthetase</keyword>
<keyword id="KW-0067">ATP-binding</keyword>
<keyword id="KW-0963">Cytoplasm</keyword>
<keyword id="KW-0436">Ligase</keyword>
<keyword id="KW-0479">Metal-binding</keyword>
<keyword id="KW-0547">Nucleotide-binding</keyword>
<keyword id="KW-0648">Protein biosynthesis</keyword>
<keyword id="KW-0862">Zinc</keyword>
<organism>
    <name type="scientific">Parasynechococcus marenigrum (strain WH8102)</name>
    <dbReference type="NCBI Taxonomy" id="84588"/>
    <lineage>
        <taxon>Bacteria</taxon>
        <taxon>Bacillati</taxon>
        <taxon>Cyanobacteriota</taxon>
        <taxon>Cyanophyceae</taxon>
        <taxon>Synechococcales</taxon>
        <taxon>Prochlorococcaceae</taxon>
        <taxon>Parasynechococcus</taxon>
        <taxon>Parasynechococcus marenigrum</taxon>
    </lineage>
</organism>
<name>SYI_PARMW</name>
<protein>
    <recommendedName>
        <fullName evidence="1">Isoleucine--tRNA ligase</fullName>
        <ecNumber evidence="1">6.1.1.5</ecNumber>
    </recommendedName>
    <alternativeName>
        <fullName evidence="1">Isoleucyl-tRNA synthetase</fullName>
        <shortName evidence="1">IleRS</shortName>
    </alternativeName>
</protein>
<comment type="function">
    <text evidence="1">Catalyzes the attachment of isoleucine to tRNA(Ile). As IleRS can inadvertently accommodate and process structurally similar amino acids such as valine, to avoid such errors it has two additional distinct tRNA(Ile)-dependent editing activities. One activity is designated as 'pretransfer' editing and involves the hydrolysis of activated Val-AMP. The other activity is designated 'posttransfer' editing and involves deacylation of mischarged Val-tRNA(Ile).</text>
</comment>
<comment type="catalytic activity">
    <reaction evidence="1">
        <text>tRNA(Ile) + L-isoleucine + ATP = L-isoleucyl-tRNA(Ile) + AMP + diphosphate</text>
        <dbReference type="Rhea" id="RHEA:11060"/>
        <dbReference type="Rhea" id="RHEA-COMP:9666"/>
        <dbReference type="Rhea" id="RHEA-COMP:9695"/>
        <dbReference type="ChEBI" id="CHEBI:30616"/>
        <dbReference type="ChEBI" id="CHEBI:33019"/>
        <dbReference type="ChEBI" id="CHEBI:58045"/>
        <dbReference type="ChEBI" id="CHEBI:78442"/>
        <dbReference type="ChEBI" id="CHEBI:78528"/>
        <dbReference type="ChEBI" id="CHEBI:456215"/>
        <dbReference type="EC" id="6.1.1.5"/>
    </reaction>
</comment>
<comment type="cofactor">
    <cofactor evidence="1">
        <name>Zn(2+)</name>
        <dbReference type="ChEBI" id="CHEBI:29105"/>
    </cofactor>
    <text evidence="1">Binds 1 zinc ion per subunit.</text>
</comment>
<comment type="subunit">
    <text evidence="1">Monomer.</text>
</comment>
<comment type="subcellular location">
    <subcellularLocation>
        <location evidence="1">Cytoplasm</location>
    </subcellularLocation>
</comment>
<comment type="domain">
    <text evidence="1">IleRS has two distinct active sites: one for aminoacylation and one for editing. The misactivated valine is translocated from the active site to the editing site, which sterically excludes the correctly activated isoleucine. The single editing site contains two valyl binding pockets, one specific for each substrate (Val-AMP or Val-tRNA(Ile)).</text>
</comment>
<comment type="similarity">
    <text evidence="1">Belongs to the class-I aminoacyl-tRNA synthetase family. IleS type 1 subfamily.</text>
</comment>
<evidence type="ECO:0000255" key="1">
    <source>
        <dbReference type="HAMAP-Rule" id="MF_02002"/>
    </source>
</evidence>
<dbReference type="EC" id="6.1.1.5" evidence="1"/>
<dbReference type="EMBL" id="BX569689">
    <property type="protein sequence ID" value="CAE06804.1"/>
    <property type="molecule type" value="Genomic_DNA"/>
</dbReference>
<dbReference type="RefSeq" id="WP_011127163.1">
    <property type="nucleotide sequence ID" value="NC_005070.1"/>
</dbReference>
<dbReference type="SMR" id="Q7U9G9"/>
<dbReference type="STRING" id="84588.SYNW0289"/>
<dbReference type="KEGG" id="syw:SYNW0289"/>
<dbReference type="eggNOG" id="COG0060">
    <property type="taxonomic scope" value="Bacteria"/>
</dbReference>
<dbReference type="HOGENOM" id="CLU_001493_7_0_3"/>
<dbReference type="Proteomes" id="UP000001422">
    <property type="component" value="Chromosome"/>
</dbReference>
<dbReference type="GO" id="GO:0005737">
    <property type="term" value="C:cytoplasm"/>
    <property type="evidence" value="ECO:0007669"/>
    <property type="project" value="UniProtKB-SubCell"/>
</dbReference>
<dbReference type="GO" id="GO:0002161">
    <property type="term" value="F:aminoacyl-tRNA deacylase activity"/>
    <property type="evidence" value="ECO:0007669"/>
    <property type="project" value="InterPro"/>
</dbReference>
<dbReference type="GO" id="GO:0005524">
    <property type="term" value="F:ATP binding"/>
    <property type="evidence" value="ECO:0007669"/>
    <property type="project" value="UniProtKB-UniRule"/>
</dbReference>
<dbReference type="GO" id="GO:0004822">
    <property type="term" value="F:isoleucine-tRNA ligase activity"/>
    <property type="evidence" value="ECO:0007669"/>
    <property type="project" value="UniProtKB-UniRule"/>
</dbReference>
<dbReference type="GO" id="GO:0000049">
    <property type="term" value="F:tRNA binding"/>
    <property type="evidence" value="ECO:0007669"/>
    <property type="project" value="InterPro"/>
</dbReference>
<dbReference type="GO" id="GO:0008270">
    <property type="term" value="F:zinc ion binding"/>
    <property type="evidence" value="ECO:0007669"/>
    <property type="project" value="UniProtKB-UniRule"/>
</dbReference>
<dbReference type="GO" id="GO:0006428">
    <property type="term" value="P:isoleucyl-tRNA aminoacylation"/>
    <property type="evidence" value="ECO:0007669"/>
    <property type="project" value="UniProtKB-UniRule"/>
</dbReference>
<dbReference type="CDD" id="cd07960">
    <property type="entry name" value="Anticodon_Ia_Ile_BEm"/>
    <property type="match status" value="1"/>
</dbReference>
<dbReference type="CDD" id="cd00818">
    <property type="entry name" value="IleRS_core"/>
    <property type="match status" value="1"/>
</dbReference>
<dbReference type="FunFam" id="1.10.730.20:FF:000001">
    <property type="entry name" value="Isoleucine--tRNA ligase"/>
    <property type="match status" value="1"/>
</dbReference>
<dbReference type="FunFam" id="3.40.50.620:FF:000111">
    <property type="entry name" value="Mitochondrial isoleucyl-tRNA synthetase"/>
    <property type="match status" value="1"/>
</dbReference>
<dbReference type="Gene3D" id="1.10.730.20">
    <property type="match status" value="1"/>
</dbReference>
<dbReference type="Gene3D" id="3.40.50.620">
    <property type="entry name" value="HUPs"/>
    <property type="match status" value="2"/>
</dbReference>
<dbReference type="Gene3D" id="1.10.10.830">
    <property type="entry name" value="Ile-tRNA synthetase CP2 domain-like"/>
    <property type="match status" value="1"/>
</dbReference>
<dbReference type="Gene3D" id="3.90.740.10">
    <property type="entry name" value="Valyl/Leucyl/Isoleucyl-tRNA synthetase, editing domain"/>
    <property type="match status" value="1"/>
</dbReference>
<dbReference type="HAMAP" id="MF_02002">
    <property type="entry name" value="Ile_tRNA_synth_type1"/>
    <property type="match status" value="1"/>
</dbReference>
<dbReference type="InterPro" id="IPR001412">
    <property type="entry name" value="aa-tRNA-synth_I_CS"/>
</dbReference>
<dbReference type="InterPro" id="IPR002300">
    <property type="entry name" value="aa-tRNA-synth_Ia"/>
</dbReference>
<dbReference type="InterPro" id="IPR033708">
    <property type="entry name" value="Anticodon_Ile_BEm"/>
</dbReference>
<dbReference type="InterPro" id="IPR002301">
    <property type="entry name" value="Ile-tRNA-ligase"/>
</dbReference>
<dbReference type="InterPro" id="IPR023585">
    <property type="entry name" value="Ile-tRNA-ligase_type1"/>
</dbReference>
<dbReference type="InterPro" id="IPR050081">
    <property type="entry name" value="Ile-tRNA_ligase"/>
</dbReference>
<dbReference type="InterPro" id="IPR013155">
    <property type="entry name" value="M/V/L/I-tRNA-synth_anticd-bd"/>
</dbReference>
<dbReference type="InterPro" id="IPR014729">
    <property type="entry name" value="Rossmann-like_a/b/a_fold"/>
</dbReference>
<dbReference type="InterPro" id="IPR009080">
    <property type="entry name" value="tRNAsynth_Ia_anticodon-bd"/>
</dbReference>
<dbReference type="InterPro" id="IPR009008">
    <property type="entry name" value="Val/Leu/Ile-tRNA-synth_edit"/>
</dbReference>
<dbReference type="InterPro" id="IPR010663">
    <property type="entry name" value="Znf_FPG/IleRS"/>
</dbReference>
<dbReference type="NCBIfam" id="TIGR00392">
    <property type="entry name" value="ileS"/>
    <property type="match status" value="1"/>
</dbReference>
<dbReference type="PANTHER" id="PTHR42765:SF1">
    <property type="entry name" value="ISOLEUCINE--TRNA LIGASE, MITOCHONDRIAL"/>
    <property type="match status" value="1"/>
</dbReference>
<dbReference type="PANTHER" id="PTHR42765">
    <property type="entry name" value="SOLEUCYL-TRNA SYNTHETASE"/>
    <property type="match status" value="1"/>
</dbReference>
<dbReference type="Pfam" id="PF08264">
    <property type="entry name" value="Anticodon_1"/>
    <property type="match status" value="1"/>
</dbReference>
<dbReference type="Pfam" id="PF00133">
    <property type="entry name" value="tRNA-synt_1"/>
    <property type="match status" value="1"/>
</dbReference>
<dbReference type="Pfam" id="PF06827">
    <property type="entry name" value="zf-FPG_IleRS"/>
    <property type="match status" value="1"/>
</dbReference>
<dbReference type="PRINTS" id="PR00984">
    <property type="entry name" value="TRNASYNTHILE"/>
</dbReference>
<dbReference type="SUPFAM" id="SSF47323">
    <property type="entry name" value="Anticodon-binding domain of a subclass of class I aminoacyl-tRNA synthetases"/>
    <property type="match status" value="1"/>
</dbReference>
<dbReference type="SUPFAM" id="SSF52374">
    <property type="entry name" value="Nucleotidylyl transferase"/>
    <property type="match status" value="1"/>
</dbReference>
<dbReference type="SUPFAM" id="SSF50677">
    <property type="entry name" value="ValRS/IleRS/LeuRS editing domain"/>
    <property type="match status" value="1"/>
</dbReference>
<dbReference type="PROSITE" id="PS00178">
    <property type="entry name" value="AA_TRNA_LIGASE_I"/>
    <property type="match status" value="1"/>
</dbReference>
<sequence length="974" mass="108998">MSKETRDAAAEGRPSYKDTLNLLQTGFGMRANAVKREPELQAFWSDNGIDGQLGLQNDGPTFTLHDGPPYANGALHMGHALNKVLKDVINKYQVLKGRRVRYVPGWDCHGLPIELKVLQSMDQEQRKALTPIKLRKKAAAYARKQVDGQMKGFQRWGIWADWEQPYLTLQKEYEAAQIKVFGEMVLKGHIYRGLKPVHWSPSSRTALAEAELEYPDGHTSPSVYVAFPAMEVPTPLRDALKAEGLELPTETDALRQALQVAIWTTTPWTLPANLAVSVNERLDYALVDDGSGRMLVVAADLIESLSTTLERPLKHRATVKGALLAGLIYRHPLLDRTSPVVIGGEYITTESGTGLVHTAPGHGVDDFHTGQKHGLPVLCPVDEAGTLTAEAGPFAGLNVLKDANPGIIEALEQAGALLKQEAYSHRYPYDWRTKKPTIFRATEQWFASVEGFRQDALDAIDQVQWTPASGRNRIEAMVKERGDWCISRQRTWGVPIPVFYHHSNGEVLLNADTLSHIETLIASHGADVWWEKDETDLLPPAYANQADQWRKGTDTMDVWFDSGSSWAAVSSQRESLSYPADLYLEGSDQHRGWFQSSLLTSVAVNGHAPYKRVLTHGFALDEKGRKMSKSLGNVVDPMVIIEGGKNQKQEPPYGADVLRLWVSSVDYSADVPIGAGILRQLADVYRKVRNTSRYLLGNLHDFNPASDAIAVADLPLLDRWMLQRTAEVMHEITEAFESYEFFRFFQLLQNFCVTDLSNFYLDIAKDRLYVSAPTDQRRRSCQTVMALIIERLAGFIAPVLCHMAEDIWQNLPYPVQETSVFQRGWPTIPSDWRNDTLSAPVQQLRDLRAAVNKVLEDCRGRQELGASLEAAVRIDARSPELQAALSWLNDNGDPDVDGLRDWLLVSQLQLGGEPWAEVLSNHEDELALIEVSRARGTKCERCWHYEGDVGQHPDHAHICGRCVGVLERRTHQLV</sequence>